<comment type="domain">
    <text evidence="1">Contains an N-terminal DNA-binding winged helix-turn-helix domain and a C-terminal regulatory domain (or effector binding domain) resembling phosphoribosyltransferase (PRT) domain.</text>
</comment>
<comment type="similarity">
    <text evidence="1">Belongs to the purine/pyrimidine phosphoribosyltransferase family. GfcR subfamily.</text>
</comment>
<comment type="sequence caution" evidence="2">
    <conflict type="erroneous initiation">
        <sequence resource="EMBL-CDS" id="ABK13891"/>
    </conflict>
    <text>Extended N-terminus.</text>
</comment>
<organism>
    <name type="scientific">Methanothrix thermoacetophila (strain DSM 6194 / JCM 14653 / NBRC 101360 / PT)</name>
    <name type="common">Methanosaeta thermophila</name>
    <dbReference type="NCBI Taxonomy" id="349307"/>
    <lineage>
        <taxon>Archaea</taxon>
        <taxon>Methanobacteriati</taxon>
        <taxon>Methanobacteriota</taxon>
        <taxon>Stenosarchaea group</taxon>
        <taxon>Methanomicrobia</taxon>
        <taxon>Methanotrichales</taxon>
        <taxon>Methanotrichaceae</taxon>
        <taxon>Methanothrix</taxon>
    </lineage>
</organism>
<dbReference type="EMBL" id="CP000477">
    <property type="protein sequence ID" value="ABK13891.1"/>
    <property type="status" value="ALT_INIT"/>
    <property type="molecule type" value="Genomic_DNA"/>
</dbReference>
<dbReference type="RefSeq" id="WP_175265637.1">
    <property type="nucleotide sequence ID" value="NC_008553.1"/>
</dbReference>
<dbReference type="SMR" id="A0B5B7"/>
<dbReference type="STRING" id="349307.Mthe_0089"/>
<dbReference type="GeneID" id="4463369"/>
<dbReference type="KEGG" id="mtp:Mthe_0089"/>
<dbReference type="HOGENOM" id="CLU_111001_0_0_2"/>
<dbReference type="OrthoDB" id="68893at2157"/>
<dbReference type="Proteomes" id="UP000000674">
    <property type="component" value="Chromosome"/>
</dbReference>
<dbReference type="GO" id="GO:0003677">
    <property type="term" value="F:DNA binding"/>
    <property type="evidence" value="ECO:0007669"/>
    <property type="project" value="UniProtKB-UniRule"/>
</dbReference>
<dbReference type="GO" id="GO:0004588">
    <property type="term" value="F:orotate phosphoribosyltransferase activity"/>
    <property type="evidence" value="ECO:0007669"/>
    <property type="project" value="TreeGrafter"/>
</dbReference>
<dbReference type="GO" id="GO:0019856">
    <property type="term" value="P:pyrimidine nucleobase biosynthetic process"/>
    <property type="evidence" value="ECO:0007669"/>
    <property type="project" value="TreeGrafter"/>
</dbReference>
<dbReference type="GO" id="GO:0010468">
    <property type="term" value="P:regulation of gene expression"/>
    <property type="evidence" value="ECO:0007669"/>
    <property type="project" value="UniProtKB-UniRule"/>
</dbReference>
<dbReference type="GO" id="GO:0006222">
    <property type="term" value="P:UMP biosynthetic process"/>
    <property type="evidence" value="ECO:0007669"/>
    <property type="project" value="TreeGrafter"/>
</dbReference>
<dbReference type="CDD" id="cd06223">
    <property type="entry name" value="PRTases_typeI"/>
    <property type="match status" value="1"/>
</dbReference>
<dbReference type="Gene3D" id="3.40.50.2020">
    <property type="match status" value="1"/>
</dbReference>
<dbReference type="HAMAP" id="MF_01214">
    <property type="entry name" value="GfcR"/>
    <property type="match status" value="1"/>
</dbReference>
<dbReference type="InterPro" id="IPR022854">
    <property type="entry name" value="GfcR-like"/>
</dbReference>
<dbReference type="InterPro" id="IPR000836">
    <property type="entry name" value="PRibTrfase_dom"/>
</dbReference>
<dbReference type="InterPro" id="IPR029057">
    <property type="entry name" value="PRTase-like"/>
</dbReference>
<dbReference type="NCBIfam" id="NF002620">
    <property type="entry name" value="PRK02277.1"/>
    <property type="match status" value="1"/>
</dbReference>
<dbReference type="PANTHER" id="PTHR19278">
    <property type="entry name" value="OROTATE PHOSPHORIBOSYLTRANSFERASE"/>
    <property type="match status" value="1"/>
</dbReference>
<dbReference type="PANTHER" id="PTHR19278:SF41">
    <property type="entry name" value="PYRE-LIKE PROTEIN"/>
    <property type="match status" value="1"/>
</dbReference>
<dbReference type="Pfam" id="PF00156">
    <property type="entry name" value="Pribosyltran"/>
    <property type="match status" value="1"/>
</dbReference>
<dbReference type="SUPFAM" id="SSF53271">
    <property type="entry name" value="PRTase-like"/>
    <property type="match status" value="1"/>
</dbReference>
<dbReference type="PROSITE" id="PS00103">
    <property type="entry name" value="PUR_PYR_PR_TRANSFER"/>
    <property type="match status" value="1"/>
</dbReference>
<feature type="chain" id="PRO_0000298900" description="Transcriptional regulator GfcR">
    <location>
        <begin position="1"/>
        <end position="203"/>
    </location>
</feature>
<gene>
    <name evidence="1" type="primary">gfcR</name>
    <name type="ordered locus">Mthe_0089</name>
</gene>
<name>GFCR_METTP</name>
<keyword id="KW-0238">DNA-binding</keyword>
<keyword id="KW-1185">Reference proteome</keyword>
<keyword id="KW-0804">Transcription</keyword>
<keyword id="KW-0805">Transcription regulation</keyword>
<reference key="1">
    <citation type="submission" date="2006-10" db="EMBL/GenBank/DDBJ databases">
        <title>Complete sequence of Methanosaeta thermophila PT.</title>
        <authorList>
            <consortium name="US DOE Joint Genome Institute"/>
            <person name="Copeland A."/>
            <person name="Lucas S."/>
            <person name="Lapidus A."/>
            <person name="Barry K."/>
            <person name="Detter J.C."/>
            <person name="Glavina del Rio T."/>
            <person name="Hammon N."/>
            <person name="Israni S."/>
            <person name="Pitluck S."/>
            <person name="Chain P."/>
            <person name="Malfatti S."/>
            <person name="Shin M."/>
            <person name="Vergez L."/>
            <person name="Schmutz J."/>
            <person name="Larimer F."/>
            <person name="Land M."/>
            <person name="Hauser L."/>
            <person name="Kyrpides N."/>
            <person name="Kim E."/>
            <person name="Smith K.S."/>
            <person name="Ingram-Smith C."/>
            <person name="Richardson P."/>
        </authorList>
    </citation>
    <scope>NUCLEOTIDE SEQUENCE [LARGE SCALE GENOMIC DNA]</scope>
    <source>
        <strain>DSM 6194 / JCM 14653 / NBRC 101360 / PT</strain>
    </source>
</reference>
<proteinExistence type="inferred from homology"/>
<sequence length="203" mass="21933">MKSIEDLIKKATELKSEGLSEGQISEELNVSRETITWLLTHAERATVPGPKDISVDWSMIGRSAYRLSHIAQALTEMIFDILDEKELDIDIVVGVALSGVPLASMVADHMGVGLAVYMPTKQMASQDVKPHGNLSTNFSDVSGRECVIVDDVITSGRTLEEAVAYLDDRGAKTNVIAVLIDKKGIDSIAGVPVCSLLKVIRVN</sequence>
<accession>A0B5B7</accession>
<protein>
    <recommendedName>
        <fullName evidence="1">Transcriptional regulator GfcR</fullName>
    </recommendedName>
</protein>
<evidence type="ECO:0000255" key="1">
    <source>
        <dbReference type="HAMAP-Rule" id="MF_01214"/>
    </source>
</evidence>
<evidence type="ECO:0000305" key="2"/>